<organism>
    <name type="scientific">Pasteurella multocida (strain Pm70)</name>
    <dbReference type="NCBI Taxonomy" id="272843"/>
    <lineage>
        <taxon>Bacteria</taxon>
        <taxon>Pseudomonadati</taxon>
        <taxon>Pseudomonadota</taxon>
        <taxon>Gammaproteobacteria</taxon>
        <taxon>Pasteurellales</taxon>
        <taxon>Pasteurellaceae</taxon>
        <taxon>Pasteurella</taxon>
    </lineage>
</organism>
<keyword id="KW-0998">Cell outer membrane</keyword>
<keyword id="KW-0133">Cell shape</keyword>
<keyword id="KW-0449">Lipoprotein</keyword>
<keyword id="KW-0472">Membrane</keyword>
<keyword id="KW-0564">Palmitate</keyword>
<keyword id="KW-0573">Peptidoglycan synthesis</keyword>
<keyword id="KW-1185">Reference proteome</keyword>
<keyword id="KW-0732">Signal</keyword>
<evidence type="ECO:0000255" key="1">
    <source>
        <dbReference type="HAMAP-Rule" id="MF_01890"/>
    </source>
</evidence>
<feature type="signal peptide" evidence="1">
    <location>
        <begin position="1"/>
        <end position="26"/>
    </location>
</feature>
<feature type="chain" id="PRO_0000405939" description="Penicillin-binding protein activator LpoA">
    <location>
        <begin position="27"/>
        <end position="571"/>
    </location>
</feature>
<feature type="lipid moiety-binding region" description="N-palmitoyl cysteine" evidence="1">
    <location>
        <position position="27"/>
    </location>
</feature>
<feature type="lipid moiety-binding region" description="S-diacylglycerol cysteine" evidence="1">
    <location>
        <position position="27"/>
    </location>
</feature>
<accession>Q9CN03</accession>
<gene>
    <name evidence="1" type="primary">lpoA</name>
    <name type="synonym">lppC</name>
    <name type="ordered locus">PM0646</name>
</gene>
<name>LPOA_PASMU</name>
<dbReference type="EMBL" id="AE004439">
    <property type="protein sequence ID" value="AAK02730.1"/>
    <property type="molecule type" value="Genomic_DNA"/>
</dbReference>
<dbReference type="SMR" id="Q9CN03"/>
<dbReference type="STRING" id="272843.PM0646"/>
<dbReference type="EnsemblBacteria" id="AAK02730">
    <property type="protein sequence ID" value="AAK02730"/>
    <property type="gene ID" value="PM0646"/>
</dbReference>
<dbReference type="KEGG" id="pmu:PM0646"/>
<dbReference type="HOGENOM" id="CLU_026091_1_1_6"/>
<dbReference type="Proteomes" id="UP000000809">
    <property type="component" value="Chromosome"/>
</dbReference>
<dbReference type="GO" id="GO:0031241">
    <property type="term" value="C:periplasmic side of cell outer membrane"/>
    <property type="evidence" value="ECO:0007669"/>
    <property type="project" value="UniProtKB-UniRule"/>
</dbReference>
<dbReference type="GO" id="GO:0030234">
    <property type="term" value="F:enzyme regulator activity"/>
    <property type="evidence" value="ECO:0007669"/>
    <property type="project" value="UniProtKB-UniRule"/>
</dbReference>
<dbReference type="GO" id="GO:0009252">
    <property type="term" value="P:peptidoglycan biosynthetic process"/>
    <property type="evidence" value="ECO:0007669"/>
    <property type="project" value="UniProtKB-UniRule"/>
</dbReference>
<dbReference type="GO" id="GO:0008360">
    <property type="term" value="P:regulation of cell shape"/>
    <property type="evidence" value="ECO:0007669"/>
    <property type="project" value="UniProtKB-KW"/>
</dbReference>
<dbReference type="CDD" id="cd06339">
    <property type="entry name" value="PBP1_YraM_LppC_lipoprotein-like"/>
    <property type="match status" value="1"/>
</dbReference>
<dbReference type="Gene3D" id="1.25.40.650">
    <property type="match status" value="1"/>
</dbReference>
<dbReference type="Gene3D" id="3.40.50.2300">
    <property type="match status" value="2"/>
</dbReference>
<dbReference type="Gene3D" id="1.25.40.10">
    <property type="entry name" value="Tetratricopeptide repeat domain"/>
    <property type="match status" value="1"/>
</dbReference>
<dbReference type="HAMAP" id="MF_01890">
    <property type="entry name" value="LpoA"/>
    <property type="match status" value="1"/>
</dbReference>
<dbReference type="InterPro" id="IPR007443">
    <property type="entry name" value="LpoA"/>
</dbReference>
<dbReference type="InterPro" id="IPR028082">
    <property type="entry name" value="Peripla_BP_I"/>
</dbReference>
<dbReference type="InterPro" id="IPR011990">
    <property type="entry name" value="TPR-like_helical_dom_sf"/>
</dbReference>
<dbReference type="PANTHER" id="PTHR38038">
    <property type="entry name" value="PENICILLIN-BINDING PROTEIN ACTIVATOR LPOA"/>
    <property type="match status" value="1"/>
</dbReference>
<dbReference type="PANTHER" id="PTHR38038:SF1">
    <property type="entry name" value="PENICILLIN-BINDING PROTEIN ACTIVATOR LPOA"/>
    <property type="match status" value="1"/>
</dbReference>
<dbReference type="Pfam" id="PF04348">
    <property type="entry name" value="LppC"/>
    <property type="match status" value="1"/>
</dbReference>
<dbReference type="SUPFAM" id="SSF53822">
    <property type="entry name" value="Periplasmic binding protein-like I"/>
    <property type="match status" value="1"/>
</dbReference>
<protein>
    <recommendedName>
        <fullName evidence="1">Penicillin-binding protein activator LpoA</fullName>
        <shortName evidence="1">PBP activator LpoA</shortName>
    </recommendedName>
</protein>
<sequence>MMTILLQHTHLKNRLMPFLLALFLAGCTTFLGGGSASLLQSDANANSDFYMNKVYQAQNLEEQHTYKLLAARVLVTENKIPQAQALLNELTTLTDEQVLDKSIIEAHIAAVKQQNTVADTQLKHINLAQLSRSQLARYYDVAARIAENRYDAIEAVKARIQIDQLLSDVSRKQANIDRTWSLLRNANRGVINNTVAEGNIALGGWLALTRAYNQNLSNPAQLSQAIQQWKTAYPTHPAAYLFPTELQGLFNFQQTQFSQVALLLPLSGNAQVIGNTIKAGFDAAKDNSATQVQVFDTAATPVDVIFDQVKQAGIRTVVGPLLKQNVDMLLNNAQLVQGLDVLTLNSTSNERAIGQLCYYGLSPEDEAESAANKMWKDGIRTPSVFVPQNDLGRRTASAFNVRWQQLAATDANIRFYNLPADITYTLDDQNTSGVYIVAMSDQLAEIKTTIDNSGRTTKLYASSRSNSANNAPEYRLLMEGLQFSDIPFFKDVTSNQYKKIEKLTKGDFSLMRLYAMGADAWLLINHFNELRQVPGYNIDGLTGKLSAGANCNIERDMTWFQYQSGGIISLN</sequence>
<proteinExistence type="inferred from homology"/>
<comment type="function">
    <text evidence="1">Regulator of peptidoglycan synthesis that is essential for the function of penicillin-binding protein 1A (PBP1a).</text>
</comment>
<comment type="subunit">
    <text evidence="1">Interacts with PBP1a.</text>
</comment>
<comment type="subcellular location">
    <subcellularLocation>
        <location evidence="1">Cell outer membrane</location>
        <topology evidence="1">Lipid-anchor</topology>
        <orientation evidence="1">Periplasmic side</orientation>
    </subcellularLocation>
</comment>
<comment type="similarity">
    <text evidence="1">Belongs to the LpoA family.</text>
</comment>
<reference key="1">
    <citation type="journal article" date="2001" name="Proc. Natl. Acad. Sci. U.S.A.">
        <title>Complete genomic sequence of Pasteurella multocida Pm70.</title>
        <authorList>
            <person name="May B.J."/>
            <person name="Zhang Q."/>
            <person name="Li L.L."/>
            <person name="Paustian M.L."/>
            <person name="Whittam T.S."/>
            <person name="Kapur V."/>
        </authorList>
    </citation>
    <scope>NUCLEOTIDE SEQUENCE [LARGE SCALE GENOMIC DNA]</scope>
    <source>
        <strain>Pm70</strain>
    </source>
</reference>